<protein>
    <recommendedName>
        <fullName evidence="1">Probable GTP-binding protein EngB</fullName>
    </recommendedName>
</protein>
<proteinExistence type="inferred from homology"/>
<name>ENGB_LACPL</name>
<accession>Q88VE3</accession>
<accession>F9UQ62</accession>
<comment type="function">
    <text evidence="1">Necessary for normal cell division and for the maintenance of normal septation.</text>
</comment>
<comment type="cofactor">
    <cofactor evidence="1">
        <name>Mg(2+)</name>
        <dbReference type="ChEBI" id="CHEBI:18420"/>
    </cofactor>
</comment>
<comment type="similarity">
    <text evidence="1">Belongs to the TRAFAC class TrmE-Era-EngA-EngB-Septin-like GTPase superfamily. EngB GTPase family.</text>
</comment>
<dbReference type="EMBL" id="AL935263">
    <property type="protein sequence ID" value="CCC79351.1"/>
    <property type="molecule type" value="Genomic_DNA"/>
</dbReference>
<dbReference type="RefSeq" id="YP_004889865.1">
    <property type="nucleotide sequence ID" value="NC_004567.2"/>
</dbReference>
<dbReference type="SMR" id="Q88VE3"/>
<dbReference type="STRING" id="220668.lp_2115"/>
<dbReference type="EnsemblBacteria" id="CCC79351">
    <property type="protein sequence ID" value="CCC79351"/>
    <property type="gene ID" value="lp_2115"/>
</dbReference>
<dbReference type="KEGG" id="lpl:lp_2115"/>
<dbReference type="PATRIC" id="fig|220668.9.peg.1792"/>
<dbReference type="eggNOG" id="COG0218">
    <property type="taxonomic scope" value="Bacteria"/>
</dbReference>
<dbReference type="HOGENOM" id="CLU_033732_3_0_9"/>
<dbReference type="OrthoDB" id="9804921at2"/>
<dbReference type="PhylomeDB" id="Q88VE3"/>
<dbReference type="Proteomes" id="UP000000432">
    <property type="component" value="Chromosome"/>
</dbReference>
<dbReference type="GO" id="GO:0005829">
    <property type="term" value="C:cytosol"/>
    <property type="evidence" value="ECO:0007669"/>
    <property type="project" value="TreeGrafter"/>
</dbReference>
<dbReference type="GO" id="GO:0005525">
    <property type="term" value="F:GTP binding"/>
    <property type="evidence" value="ECO:0007669"/>
    <property type="project" value="UniProtKB-UniRule"/>
</dbReference>
<dbReference type="GO" id="GO:0046872">
    <property type="term" value="F:metal ion binding"/>
    <property type="evidence" value="ECO:0007669"/>
    <property type="project" value="UniProtKB-KW"/>
</dbReference>
<dbReference type="GO" id="GO:0000917">
    <property type="term" value="P:division septum assembly"/>
    <property type="evidence" value="ECO:0007669"/>
    <property type="project" value="UniProtKB-KW"/>
</dbReference>
<dbReference type="CDD" id="cd01876">
    <property type="entry name" value="YihA_EngB"/>
    <property type="match status" value="1"/>
</dbReference>
<dbReference type="FunFam" id="3.40.50.300:FF:000098">
    <property type="entry name" value="Probable GTP-binding protein EngB"/>
    <property type="match status" value="1"/>
</dbReference>
<dbReference type="Gene3D" id="3.40.50.300">
    <property type="entry name" value="P-loop containing nucleotide triphosphate hydrolases"/>
    <property type="match status" value="1"/>
</dbReference>
<dbReference type="HAMAP" id="MF_00321">
    <property type="entry name" value="GTPase_EngB"/>
    <property type="match status" value="1"/>
</dbReference>
<dbReference type="InterPro" id="IPR030393">
    <property type="entry name" value="G_ENGB_dom"/>
</dbReference>
<dbReference type="InterPro" id="IPR006073">
    <property type="entry name" value="GTP-bd"/>
</dbReference>
<dbReference type="InterPro" id="IPR019987">
    <property type="entry name" value="GTP-bd_ribosome_bio_YsxC"/>
</dbReference>
<dbReference type="InterPro" id="IPR027417">
    <property type="entry name" value="P-loop_NTPase"/>
</dbReference>
<dbReference type="InterPro" id="IPR005225">
    <property type="entry name" value="Small_GTP-bd"/>
</dbReference>
<dbReference type="NCBIfam" id="TIGR03598">
    <property type="entry name" value="GTPase_YsxC"/>
    <property type="match status" value="1"/>
</dbReference>
<dbReference type="NCBIfam" id="TIGR00231">
    <property type="entry name" value="small_GTP"/>
    <property type="match status" value="1"/>
</dbReference>
<dbReference type="PANTHER" id="PTHR11649:SF13">
    <property type="entry name" value="ENGB-TYPE G DOMAIN-CONTAINING PROTEIN"/>
    <property type="match status" value="1"/>
</dbReference>
<dbReference type="PANTHER" id="PTHR11649">
    <property type="entry name" value="MSS1/TRME-RELATED GTP-BINDING PROTEIN"/>
    <property type="match status" value="1"/>
</dbReference>
<dbReference type="Pfam" id="PF01926">
    <property type="entry name" value="MMR_HSR1"/>
    <property type="match status" value="1"/>
</dbReference>
<dbReference type="SUPFAM" id="SSF52540">
    <property type="entry name" value="P-loop containing nucleoside triphosphate hydrolases"/>
    <property type="match status" value="1"/>
</dbReference>
<dbReference type="PROSITE" id="PS51706">
    <property type="entry name" value="G_ENGB"/>
    <property type="match status" value="1"/>
</dbReference>
<reference key="1">
    <citation type="journal article" date="2003" name="Proc. Natl. Acad. Sci. U.S.A.">
        <title>Complete genome sequence of Lactobacillus plantarum WCFS1.</title>
        <authorList>
            <person name="Kleerebezem M."/>
            <person name="Boekhorst J."/>
            <person name="van Kranenburg R."/>
            <person name="Molenaar D."/>
            <person name="Kuipers O.P."/>
            <person name="Leer R."/>
            <person name="Tarchini R."/>
            <person name="Peters S.A."/>
            <person name="Sandbrink H.M."/>
            <person name="Fiers M.W.E.J."/>
            <person name="Stiekema W."/>
            <person name="Klein Lankhorst R.M."/>
            <person name="Bron P.A."/>
            <person name="Hoffer S.M."/>
            <person name="Nierop Groot M.N."/>
            <person name="Kerkhoven R."/>
            <person name="De Vries M."/>
            <person name="Ursing B."/>
            <person name="De Vos W.M."/>
            <person name="Siezen R.J."/>
        </authorList>
    </citation>
    <scope>NUCLEOTIDE SEQUENCE [LARGE SCALE GENOMIC DNA]</scope>
    <source>
        <strain>ATCC BAA-793 / NCIMB 8826 / WCFS1</strain>
    </source>
</reference>
<reference key="2">
    <citation type="journal article" date="2012" name="J. Bacteriol.">
        <title>Complete resequencing and reannotation of the Lactobacillus plantarum WCFS1 genome.</title>
        <authorList>
            <person name="Siezen R.J."/>
            <person name="Francke C."/>
            <person name="Renckens B."/>
            <person name="Boekhorst J."/>
            <person name="Wels M."/>
            <person name="Kleerebezem M."/>
            <person name="van Hijum S.A."/>
        </authorList>
    </citation>
    <scope>NUCLEOTIDE SEQUENCE [LARGE SCALE GENOMIC DNA]</scope>
    <scope>GENOME REANNOTATION</scope>
    <source>
        <strain>ATCC BAA-793 / NCIMB 8826 / WCFS1</strain>
    </source>
</reference>
<feature type="chain" id="PRO_0000157757" description="Probable GTP-binding protein EngB">
    <location>
        <begin position="1"/>
        <end position="197"/>
    </location>
</feature>
<feature type="domain" description="EngB-type G" evidence="1">
    <location>
        <begin position="22"/>
        <end position="195"/>
    </location>
</feature>
<feature type="binding site" evidence="1">
    <location>
        <begin position="30"/>
        <end position="37"/>
    </location>
    <ligand>
        <name>GTP</name>
        <dbReference type="ChEBI" id="CHEBI:37565"/>
    </ligand>
</feature>
<feature type="binding site" evidence="1">
    <location>
        <position position="37"/>
    </location>
    <ligand>
        <name>Mg(2+)</name>
        <dbReference type="ChEBI" id="CHEBI:18420"/>
    </ligand>
</feature>
<feature type="binding site" evidence="1">
    <location>
        <begin position="57"/>
        <end position="61"/>
    </location>
    <ligand>
        <name>GTP</name>
        <dbReference type="ChEBI" id="CHEBI:37565"/>
    </ligand>
</feature>
<feature type="binding site" evidence="1">
    <location>
        <position position="59"/>
    </location>
    <ligand>
        <name>Mg(2+)</name>
        <dbReference type="ChEBI" id="CHEBI:18420"/>
    </ligand>
</feature>
<feature type="binding site" evidence="1">
    <location>
        <begin position="75"/>
        <end position="78"/>
    </location>
    <ligand>
        <name>GTP</name>
        <dbReference type="ChEBI" id="CHEBI:37565"/>
    </ligand>
</feature>
<feature type="binding site" evidence="1">
    <location>
        <begin position="142"/>
        <end position="145"/>
    </location>
    <ligand>
        <name>GTP</name>
        <dbReference type="ChEBI" id="CHEBI:37565"/>
    </ligand>
</feature>
<feature type="binding site" evidence="1">
    <location>
        <begin position="174"/>
        <end position="176"/>
    </location>
    <ligand>
        <name>GTP</name>
        <dbReference type="ChEBI" id="CHEBI:37565"/>
    </ligand>
</feature>
<evidence type="ECO:0000255" key="1">
    <source>
        <dbReference type="HAMAP-Rule" id="MF_00321"/>
    </source>
</evidence>
<sequence length="197" mass="22377">MEVHNVELVMSAVAPSQYPTTGFPEIGLAGRSNVGKSSLINVLINRNSYARTSSQPGKTQTLNFYKVEDQLYFVDVPGYGYAKVSKKEREKWGQMIETYLTSRETLRGVVILVDARHAPTKDDVAMYEWMRYYEMPLLVVATKSDKIPRGKWNKQESLIKKTLNFQAEDDFIAFSAKTKEGKDAVWQWIEAHTVGGN</sequence>
<keyword id="KW-0131">Cell cycle</keyword>
<keyword id="KW-0132">Cell division</keyword>
<keyword id="KW-0342">GTP-binding</keyword>
<keyword id="KW-0460">Magnesium</keyword>
<keyword id="KW-0479">Metal-binding</keyword>
<keyword id="KW-0547">Nucleotide-binding</keyword>
<keyword id="KW-1185">Reference proteome</keyword>
<keyword id="KW-0717">Septation</keyword>
<gene>
    <name evidence="1" type="primary">engB</name>
    <name type="ordered locus">lp_2115</name>
</gene>
<organism>
    <name type="scientific">Lactiplantibacillus plantarum (strain ATCC BAA-793 / NCIMB 8826 / WCFS1)</name>
    <name type="common">Lactobacillus plantarum</name>
    <dbReference type="NCBI Taxonomy" id="220668"/>
    <lineage>
        <taxon>Bacteria</taxon>
        <taxon>Bacillati</taxon>
        <taxon>Bacillota</taxon>
        <taxon>Bacilli</taxon>
        <taxon>Lactobacillales</taxon>
        <taxon>Lactobacillaceae</taxon>
        <taxon>Lactiplantibacillus</taxon>
    </lineage>
</organism>